<evidence type="ECO:0000250" key="1">
    <source>
        <dbReference type="UniProtKB" id="B8M9J8"/>
    </source>
</evidence>
<evidence type="ECO:0000255" key="2"/>
<evidence type="ECO:0000255" key="3">
    <source>
        <dbReference type="PROSITE-ProRule" id="PRU00498"/>
    </source>
</evidence>
<evidence type="ECO:0000269" key="4">
    <source>
    </source>
</evidence>
<evidence type="ECO:0000303" key="5">
    <source>
    </source>
</evidence>
<evidence type="ECO:0000305" key="6"/>
<evidence type="ECO:0000305" key="7">
    <source>
    </source>
</evidence>
<evidence type="ECO:0000305" key="8">
    <source>
    </source>
</evidence>
<reference key="1">
    <citation type="journal article" date="2008" name="PLoS Genet.">
        <title>Genomic islands in the pathogenic filamentous fungus Aspergillus fumigatus.</title>
        <authorList>
            <person name="Fedorova N.D."/>
            <person name="Khaldi N."/>
            <person name="Joardar V.S."/>
            <person name="Maiti R."/>
            <person name="Amedeo P."/>
            <person name="Anderson M.J."/>
            <person name="Crabtree J."/>
            <person name="Silva J.C."/>
            <person name="Badger J.H."/>
            <person name="Albarraq A."/>
            <person name="Angiuoli S."/>
            <person name="Bussey H."/>
            <person name="Bowyer P."/>
            <person name="Cotty P.J."/>
            <person name="Dyer P.S."/>
            <person name="Egan A."/>
            <person name="Galens K."/>
            <person name="Fraser-Liggett C.M."/>
            <person name="Haas B.J."/>
            <person name="Inman J.M."/>
            <person name="Kent R."/>
            <person name="Lemieux S."/>
            <person name="Malavazi I."/>
            <person name="Orvis J."/>
            <person name="Roemer T."/>
            <person name="Ronning C.M."/>
            <person name="Sundaram J.P."/>
            <person name="Sutton G."/>
            <person name="Turner G."/>
            <person name="Venter J.C."/>
            <person name="White O.R."/>
            <person name="Whitty B.R."/>
            <person name="Youngman P."/>
            <person name="Wolfe K.H."/>
            <person name="Goldman G.H."/>
            <person name="Wortman J.R."/>
            <person name="Jiang B."/>
            <person name="Denning D.W."/>
            <person name="Nierman W.C."/>
        </authorList>
    </citation>
    <scope>NUCLEOTIDE SEQUENCE [LARGE SCALE GENOMIC DNA]</scope>
    <source>
        <strain>ATCC 1020 / DSM 3700 / CBS 544.65 / FGSC A1164 / JCM 1740 / NRRL 181 / WB 181</strain>
    </source>
</reference>
<reference key="2">
    <citation type="journal article" date="2013" name="ACS Synth. Biol.">
        <title>Discovery of cryptic polyketide metabolites from dermatophytes using heterologous expression in Aspergillus nidulans.</title>
        <authorList>
            <person name="Yin W.B."/>
            <person name="Chooi Y.H."/>
            <person name="Smith A.R."/>
            <person name="Cacho R.A."/>
            <person name="Hu Y."/>
            <person name="White T.C."/>
            <person name="Tang Y."/>
        </authorList>
    </citation>
    <scope>FUNCTION</scope>
</reference>
<reference key="3">
    <citation type="journal article" date="2013" name="Org. Lett.">
        <title>Genome mining of a prenylated and immunosuppressive polyketide from pathogenic fungi.</title>
        <authorList>
            <person name="Chooi Y.H."/>
            <person name="Fang J."/>
            <person name="Liu H."/>
            <person name="Filler S.G."/>
            <person name="Wang P."/>
            <person name="Tang Y."/>
        </authorList>
    </citation>
    <scope>FUNCTION</scope>
</reference>
<gene>
    <name evidence="5" type="primary">nscC</name>
    <name type="ORF">NFIA_112250</name>
</gene>
<accession>A1D8J0</accession>
<feature type="signal peptide" evidence="2">
    <location>
        <begin position="1"/>
        <end position="20"/>
    </location>
</feature>
<feature type="chain" id="PRO_0000437906" description="FAD-dependent monooxygenase nscC" evidence="2">
    <location>
        <begin position="21"/>
        <end position="408"/>
    </location>
</feature>
<feature type="binding site" evidence="1">
    <location>
        <position position="34"/>
    </location>
    <ligand>
        <name>FAD</name>
        <dbReference type="ChEBI" id="CHEBI:57692"/>
    </ligand>
</feature>
<feature type="binding site" evidence="1">
    <location>
        <position position="45"/>
    </location>
    <ligand>
        <name>FAD</name>
        <dbReference type="ChEBI" id="CHEBI:57692"/>
    </ligand>
</feature>
<feature type="binding site" evidence="1">
    <location>
        <position position="119"/>
    </location>
    <ligand>
        <name>FAD</name>
        <dbReference type="ChEBI" id="CHEBI:57692"/>
    </ligand>
</feature>
<feature type="binding site" evidence="1">
    <location>
        <position position="328"/>
    </location>
    <ligand>
        <name>FAD</name>
        <dbReference type="ChEBI" id="CHEBI:57692"/>
    </ligand>
</feature>
<feature type="binding site" evidence="1">
    <location>
        <position position="341"/>
    </location>
    <ligand>
        <name>FAD</name>
        <dbReference type="ChEBI" id="CHEBI:57692"/>
    </ligand>
</feature>
<feature type="glycosylation site" description="N-linked (GlcNAc...) asparagine" evidence="3">
    <location>
        <position position="91"/>
    </location>
</feature>
<feature type="glycosylation site" description="N-linked (GlcNAc...) asparagine" evidence="3">
    <location>
        <position position="103"/>
    </location>
</feature>
<feature type="glycosylation site" description="N-linked (GlcNAc...) asparagine" evidence="3">
    <location>
        <position position="170"/>
    </location>
</feature>
<feature type="glycosylation site" description="N-linked (GlcNAc...) asparagine" evidence="3">
    <location>
        <position position="231"/>
    </location>
</feature>
<proteinExistence type="inferred from homology"/>
<dbReference type="EC" id="1.-.-.-" evidence="7"/>
<dbReference type="EMBL" id="DS027692">
    <property type="protein sequence ID" value="EAW20701.1"/>
    <property type="molecule type" value="Genomic_DNA"/>
</dbReference>
<dbReference type="RefSeq" id="XP_001262598.1">
    <property type="nucleotide sequence ID" value="XM_001262597.1"/>
</dbReference>
<dbReference type="SMR" id="A1D8J0"/>
<dbReference type="STRING" id="331117.A1D8J0"/>
<dbReference type="GlyCosmos" id="A1D8J0">
    <property type="glycosylation" value="4 sites, No reported glycans"/>
</dbReference>
<dbReference type="EnsemblFungi" id="EAW20701">
    <property type="protein sequence ID" value="EAW20701"/>
    <property type="gene ID" value="NFIA_112250"/>
</dbReference>
<dbReference type="GeneID" id="4589234"/>
<dbReference type="KEGG" id="nfi:NFIA_112250"/>
<dbReference type="VEuPathDB" id="FungiDB:NFIA_112250"/>
<dbReference type="eggNOG" id="KOG2614">
    <property type="taxonomic scope" value="Eukaryota"/>
</dbReference>
<dbReference type="HOGENOM" id="CLU_040697_0_0_1"/>
<dbReference type="OMA" id="IPLIHYH"/>
<dbReference type="OrthoDB" id="47494at2759"/>
<dbReference type="Proteomes" id="UP000006702">
    <property type="component" value="Unassembled WGS sequence"/>
</dbReference>
<dbReference type="GO" id="GO:0071949">
    <property type="term" value="F:FAD binding"/>
    <property type="evidence" value="ECO:0007669"/>
    <property type="project" value="InterPro"/>
</dbReference>
<dbReference type="GO" id="GO:0004497">
    <property type="term" value="F:monooxygenase activity"/>
    <property type="evidence" value="ECO:0007669"/>
    <property type="project" value="UniProtKB-KW"/>
</dbReference>
<dbReference type="FunFam" id="3.50.50.60:FF:000429">
    <property type="entry name" value="FAD-dependent monooxygenase nscC"/>
    <property type="match status" value="1"/>
</dbReference>
<dbReference type="Gene3D" id="3.50.50.60">
    <property type="entry name" value="FAD/NAD(P)-binding domain"/>
    <property type="match status" value="1"/>
</dbReference>
<dbReference type="InterPro" id="IPR002938">
    <property type="entry name" value="FAD-bd"/>
</dbReference>
<dbReference type="InterPro" id="IPR036188">
    <property type="entry name" value="FAD/NAD-bd_sf"/>
</dbReference>
<dbReference type="PANTHER" id="PTHR47178:SF4">
    <property type="entry name" value="FAD-DEPENDENT MONOOXYGENASE APTC"/>
    <property type="match status" value="1"/>
</dbReference>
<dbReference type="PANTHER" id="PTHR47178">
    <property type="entry name" value="MONOOXYGENASE, FAD-BINDING"/>
    <property type="match status" value="1"/>
</dbReference>
<dbReference type="Pfam" id="PF01494">
    <property type="entry name" value="FAD_binding_3"/>
    <property type="match status" value="1"/>
</dbReference>
<dbReference type="PRINTS" id="PR00420">
    <property type="entry name" value="RNGMNOXGNASE"/>
</dbReference>
<dbReference type="SUPFAM" id="SSF51905">
    <property type="entry name" value="FAD/NAD(P)-binding domain"/>
    <property type="match status" value="1"/>
</dbReference>
<sequence length="408" mass="44828">MAPPLPILIIGAGISGLTTARLLTNSGIPNIVFEASSPDRRQGFAISLREWGYATLLSALGDLPLRSLTRGVAPDREIGGSGWIDQAVWDNGTAKKLFVPDANSSTKEQIVRANRNALRRWIADCGEEELDVRYGHRLKRVEGSLGDVQVEFENGAFYRGLMVVAADGVNSTVRSQVLADVQPEIVPAVLYHGEFQLPRADFDRLFRPHTGESNILAGVGDGFNTPFAVCNMTKTHVHMDWSYSRPAWGSGENDPLYRPNLASEEAKRIPPALVEELASRDLAEPWSLFLNGEAIQHHRVFHWAVRCVSVTQEDMQRAVGRGIAFVGDSWHAMPIFGGEGGNHALADGVELAAAVAAGVAGDLGVAIGNYYDRAWKRSQDAVRRSKQRFYALHRPMAQWRELSQKKPV</sequence>
<comment type="function">
    <text evidence="4 8">FAD-dependent monooxygenase; part of the gene cluster that mediates the biosynthesis of neosartoricin, a prenylated anthracenone that exhibits T-cell antiproliferative activity, suggestive of a physiological role as an immunosuppressive agent (PubMed:23368997, PubMed:23758576). The non-reducing polyketide synthase nscA probably synthesizes and cyclizes the decaketide backbone (PubMed:23368997). The hydrolase nscB then mediates the product release through hydrolysis followed by spontaneous decarboxylation (PubMed:23368997). The prenyltransferase nscD catalyzes the addition of the dimethylallyl group to the aromatic C5 (PubMed:23368997). The FAD-dependent monooxygenase nscC is then responsible for the stereospecific hydroxylation at C2 (PubMed:23368997). There is no gene encoding O-acetyltransferase in the nsc gene cluster; thus, the last step of 2-O-acetylation leading to neosartoricin may be catalyzed by an unidentified O-acetyltransferase (PubMed:23368997).</text>
</comment>
<comment type="cofactor">
    <cofactor evidence="6">
        <name>FAD</name>
        <dbReference type="ChEBI" id="CHEBI:57692"/>
    </cofactor>
</comment>
<comment type="pathway">
    <text evidence="4">Secondary metabolite biosynthesis.</text>
</comment>
<comment type="similarity">
    <text evidence="6">Belongs to the paxM FAD-dependent monooxygenase family.</text>
</comment>
<protein>
    <recommendedName>
        <fullName evidence="5">FAD-dependent monooxygenase nscC</fullName>
        <ecNumber evidence="7">1.-.-.-</ecNumber>
    </recommendedName>
    <alternativeName>
        <fullName evidence="5">Neosartoricin biosynthesis protein C</fullName>
    </alternativeName>
</protein>
<name>NSCC_NEOFI</name>
<organism>
    <name type="scientific">Neosartorya fischeri (strain ATCC 1020 / DSM 3700 / CBS 544.65 / FGSC A1164 / JCM 1740 / NRRL 181 / WB 181)</name>
    <name type="common">Aspergillus fischerianus</name>
    <dbReference type="NCBI Taxonomy" id="331117"/>
    <lineage>
        <taxon>Eukaryota</taxon>
        <taxon>Fungi</taxon>
        <taxon>Dikarya</taxon>
        <taxon>Ascomycota</taxon>
        <taxon>Pezizomycotina</taxon>
        <taxon>Eurotiomycetes</taxon>
        <taxon>Eurotiomycetidae</taxon>
        <taxon>Eurotiales</taxon>
        <taxon>Aspergillaceae</taxon>
        <taxon>Aspergillus</taxon>
        <taxon>Aspergillus subgen. Fumigati</taxon>
    </lineage>
</organism>
<keyword id="KW-0274">FAD</keyword>
<keyword id="KW-0285">Flavoprotein</keyword>
<keyword id="KW-0325">Glycoprotein</keyword>
<keyword id="KW-0503">Monooxygenase</keyword>
<keyword id="KW-0560">Oxidoreductase</keyword>
<keyword id="KW-1185">Reference proteome</keyword>
<keyword id="KW-0732">Signal</keyword>